<evidence type="ECO:0000255" key="1">
    <source>
        <dbReference type="HAMAP-Rule" id="MF_01671"/>
    </source>
</evidence>
<dbReference type="EC" id="1.1.1.18" evidence="1"/>
<dbReference type="EMBL" id="CP000386">
    <property type="protein sequence ID" value="ABG04683.1"/>
    <property type="molecule type" value="Genomic_DNA"/>
</dbReference>
<dbReference type="RefSeq" id="WP_011564700.1">
    <property type="nucleotide sequence ID" value="NC_008148.1"/>
</dbReference>
<dbReference type="SMR" id="Q1AV95"/>
<dbReference type="STRING" id="266117.Rxyl_1723"/>
<dbReference type="KEGG" id="rxy:Rxyl_1723"/>
<dbReference type="eggNOG" id="COG0673">
    <property type="taxonomic scope" value="Bacteria"/>
</dbReference>
<dbReference type="HOGENOM" id="CLU_023194_0_1_11"/>
<dbReference type="PhylomeDB" id="Q1AV95"/>
<dbReference type="Proteomes" id="UP000006637">
    <property type="component" value="Chromosome"/>
</dbReference>
<dbReference type="GO" id="GO:0050112">
    <property type="term" value="F:inositol 2-dehydrogenase (NAD+) activity"/>
    <property type="evidence" value="ECO:0007669"/>
    <property type="project" value="UniProtKB-UniRule"/>
</dbReference>
<dbReference type="GO" id="GO:0000166">
    <property type="term" value="F:nucleotide binding"/>
    <property type="evidence" value="ECO:0007669"/>
    <property type="project" value="InterPro"/>
</dbReference>
<dbReference type="GO" id="GO:0019310">
    <property type="term" value="P:inositol catabolic process"/>
    <property type="evidence" value="ECO:0007669"/>
    <property type="project" value="UniProtKB-UniRule"/>
</dbReference>
<dbReference type="Gene3D" id="3.30.360.10">
    <property type="entry name" value="Dihydrodipicolinate Reductase, domain 2"/>
    <property type="match status" value="1"/>
</dbReference>
<dbReference type="Gene3D" id="3.40.50.720">
    <property type="entry name" value="NAD(P)-binding Rossmann-like Domain"/>
    <property type="match status" value="1"/>
</dbReference>
<dbReference type="HAMAP" id="MF_01671">
    <property type="entry name" value="IolG"/>
    <property type="match status" value="1"/>
</dbReference>
<dbReference type="InterPro" id="IPR050424">
    <property type="entry name" value="Gfo-Idh-MocA_inositol_DH"/>
</dbReference>
<dbReference type="InterPro" id="IPR000683">
    <property type="entry name" value="Gfo/Idh/MocA-like_OxRdtase_N"/>
</dbReference>
<dbReference type="InterPro" id="IPR055170">
    <property type="entry name" value="GFO_IDH_MocA-like_dom"/>
</dbReference>
<dbReference type="InterPro" id="IPR023794">
    <property type="entry name" value="MI/DCI_dehydrogenase"/>
</dbReference>
<dbReference type="InterPro" id="IPR036291">
    <property type="entry name" value="NAD(P)-bd_dom_sf"/>
</dbReference>
<dbReference type="PANTHER" id="PTHR43593">
    <property type="match status" value="1"/>
</dbReference>
<dbReference type="PANTHER" id="PTHR43593:SF1">
    <property type="entry name" value="INOSITOL 2-DEHYDROGENASE"/>
    <property type="match status" value="1"/>
</dbReference>
<dbReference type="Pfam" id="PF01408">
    <property type="entry name" value="GFO_IDH_MocA"/>
    <property type="match status" value="1"/>
</dbReference>
<dbReference type="Pfam" id="PF22725">
    <property type="entry name" value="GFO_IDH_MocA_C3"/>
    <property type="match status" value="1"/>
</dbReference>
<dbReference type="SUPFAM" id="SSF55347">
    <property type="entry name" value="Glyceraldehyde-3-phosphate dehydrogenase-like, C-terminal domain"/>
    <property type="match status" value="1"/>
</dbReference>
<dbReference type="SUPFAM" id="SSF51735">
    <property type="entry name" value="NAD(P)-binding Rossmann-fold domains"/>
    <property type="match status" value="1"/>
</dbReference>
<feature type="chain" id="PRO_0000352589" description="Inositol 2-dehydrogenase">
    <location>
        <begin position="1"/>
        <end position="347"/>
    </location>
</feature>
<keyword id="KW-0520">NAD</keyword>
<keyword id="KW-0560">Oxidoreductase</keyword>
<keyword id="KW-1185">Reference proteome</keyword>
<comment type="function">
    <text evidence="1">Involved in the oxidation of myo-inositol (MI) to 2-keto-myo-inositol (2KMI or 2-inosose).</text>
</comment>
<comment type="catalytic activity">
    <reaction evidence="1">
        <text>myo-inositol + NAD(+) = scyllo-inosose + NADH + H(+)</text>
        <dbReference type="Rhea" id="RHEA:16949"/>
        <dbReference type="ChEBI" id="CHEBI:15378"/>
        <dbReference type="ChEBI" id="CHEBI:17268"/>
        <dbReference type="ChEBI" id="CHEBI:17811"/>
        <dbReference type="ChEBI" id="CHEBI:57540"/>
        <dbReference type="ChEBI" id="CHEBI:57945"/>
        <dbReference type="EC" id="1.1.1.18"/>
    </reaction>
</comment>
<comment type="subunit">
    <text evidence="1">Homotetramer.</text>
</comment>
<comment type="similarity">
    <text evidence="1">Belongs to the Gfo/Idh/MocA family.</text>
</comment>
<accession>Q1AV95</accession>
<sequence>MRGDSERIAVGVVGTGGMGGMHAENLHFRVPGARLVAVADLDTRRAGGVAERSGAEVFEDGFDLIRSDRVEAVVIASPDPTHAPLVLECLKNEKPVLCEKPLADSADAARKVVEAEVELGRKLVQVGFMRRYDPQHVAVKEAVASGAVGAPVLFRGWHRNADIEPGITSEWVVINATIHDIDSARWFIEEEIEEVYVRGMNTAPKLGANVWDLQLIQFTTAGGRLGSIETNVVSGYGYEVGVEIVGERGTVQVPPLSGAIVRRGFAASQRIEDGWLARFHAAYVIEMQGWVGALLRGEAPAGPDAWDGYASLVVADACIASLRSGAPQKVETLEPPTLYRRDVEVTG</sequence>
<reference key="1">
    <citation type="submission" date="2006-06" db="EMBL/GenBank/DDBJ databases">
        <title>Complete sequence of Rubrobacter xylanophilus DSM 9941.</title>
        <authorList>
            <consortium name="US DOE Joint Genome Institute"/>
            <person name="Copeland A."/>
            <person name="Lucas S."/>
            <person name="Lapidus A."/>
            <person name="Barry K."/>
            <person name="Detter J.C."/>
            <person name="Glavina del Rio T."/>
            <person name="Hammon N."/>
            <person name="Israni S."/>
            <person name="Dalin E."/>
            <person name="Tice H."/>
            <person name="Pitluck S."/>
            <person name="Munk A.C."/>
            <person name="Brettin T."/>
            <person name="Bruce D."/>
            <person name="Han C."/>
            <person name="Tapia R."/>
            <person name="Gilna P."/>
            <person name="Schmutz J."/>
            <person name="Larimer F."/>
            <person name="Land M."/>
            <person name="Hauser L."/>
            <person name="Kyrpides N."/>
            <person name="Lykidis A."/>
            <person name="da Costa M.S."/>
            <person name="Rainey F.A."/>
            <person name="Empadinhas N."/>
            <person name="Jolivet E."/>
            <person name="Battista J.R."/>
            <person name="Richardson P."/>
        </authorList>
    </citation>
    <scope>NUCLEOTIDE SEQUENCE [LARGE SCALE GENOMIC DNA]</scope>
    <source>
        <strain>DSM 9941 / JCM 11954 / NBRC 16129 / PRD-1</strain>
    </source>
</reference>
<gene>
    <name evidence="1" type="primary">iolG</name>
    <name type="ordered locus">Rxyl_1723</name>
</gene>
<name>IOLG_RUBXD</name>
<protein>
    <recommendedName>
        <fullName evidence="1">Inositol 2-dehydrogenase</fullName>
        <ecNumber evidence="1">1.1.1.18</ecNumber>
    </recommendedName>
    <alternativeName>
        <fullName evidence="1">Myo-inositol 2-dehydrogenase</fullName>
        <shortName evidence="1">MI 2-dehydrogenase</shortName>
    </alternativeName>
</protein>
<proteinExistence type="inferred from homology"/>
<organism>
    <name type="scientific">Rubrobacter xylanophilus (strain DSM 9941 / JCM 11954 / NBRC 16129 / PRD-1)</name>
    <dbReference type="NCBI Taxonomy" id="266117"/>
    <lineage>
        <taxon>Bacteria</taxon>
        <taxon>Bacillati</taxon>
        <taxon>Actinomycetota</taxon>
        <taxon>Rubrobacteria</taxon>
        <taxon>Rubrobacterales</taxon>
        <taxon>Rubrobacteraceae</taxon>
        <taxon>Rubrobacter</taxon>
    </lineage>
</organism>